<name>RL32_PICTO</name>
<comment type="similarity">
    <text evidence="1">Belongs to the eukaryotic ribosomal protein eL32 family.</text>
</comment>
<proteinExistence type="inferred from homology"/>
<evidence type="ECO:0000305" key="1"/>
<reference key="1">
    <citation type="journal article" date="2004" name="Proc. Natl. Acad. Sci. U.S.A.">
        <title>Genome sequence of Picrophilus torridus and its implications for life around pH 0.</title>
        <authorList>
            <person name="Fuetterer O."/>
            <person name="Angelov A."/>
            <person name="Liesegang H."/>
            <person name="Gottschalk G."/>
            <person name="Schleper C."/>
            <person name="Schepers B."/>
            <person name="Dock C."/>
            <person name="Antranikian G."/>
            <person name="Liebl W."/>
        </authorList>
    </citation>
    <scope>NUCLEOTIDE SEQUENCE [LARGE SCALE GENOMIC DNA]</scope>
    <source>
        <strain>ATCC 700027 / DSM 9790 / JCM 10055 / NBRC 100828 / KAW 2/3</strain>
    </source>
</reference>
<accession>Q6L1B0</accession>
<organism>
    <name type="scientific">Picrophilus torridus (strain ATCC 700027 / DSM 9790 / JCM 10055 / NBRC 100828 / KAW 2/3)</name>
    <dbReference type="NCBI Taxonomy" id="1122961"/>
    <lineage>
        <taxon>Archaea</taxon>
        <taxon>Methanobacteriati</taxon>
        <taxon>Thermoplasmatota</taxon>
        <taxon>Thermoplasmata</taxon>
        <taxon>Thermoplasmatales</taxon>
        <taxon>Picrophilaceae</taxon>
        <taxon>Picrophilus</taxon>
    </lineage>
</organism>
<sequence>MSEKPLLSKDEKRLLKIKNRMSRKRVEFRRQEWFRYKKFNESWRKPRGKHSKLREHLGYRPPVVDAGYRSPAAVRGLHPSGFAEKLVYNVNDLKSINPDREGARIASSVGMRKRKEIEEEADNLGIHVFNRVVK</sequence>
<dbReference type="EMBL" id="AE017261">
    <property type="protein sequence ID" value="AAT43242.1"/>
    <property type="molecule type" value="Genomic_DNA"/>
</dbReference>
<dbReference type="RefSeq" id="WP_011177458.1">
    <property type="nucleotide sequence ID" value="NC_005877.1"/>
</dbReference>
<dbReference type="SMR" id="Q6L1B0"/>
<dbReference type="FunCoup" id="Q6L1B0">
    <property type="interactions" value="183"/>
</dbReference>
<dbReference type="STRING" id="263820.PTO0657"/>
<dbReference type="PaxDb" id="263820-PTO0657"/>
<dbReference type="GeneID" id="2844335"/>
<dbReference type="KEGG" id="pto:PTO0657"/>
<dbReference type="PATRIC" id="fig|263820.9.peg.690"/>
<dbReference type="eggNOG" id="arCOG00781">
    <property type="taxonomic scope" value="Archaea"/>
</dbReference>
<dbReference type="HOGENOM" id="CLU_071479_3_1_2"/>
<dbReference type="InParanoid" id="Q6L1B0"/>
<dbReference type="OrthoDB" id="372100at2157"/>
<dbReference type="Proteomes" id="UP000000438">
    <property type="component" value="Chromosome"/>
</dbReference>
<dbReference type="GO" id="GO:0022625">
    <property type="term" value="C:cytosolic large ribosomal subunit"/>
    <property type="evidence" value="ECO:0007669"/>
    <property type="project" value="TreeGrafter"/>
</dbReference>
<dbReference type="GO" id="GO:0003735">
    <property type="term" value="F:structural constituent of ribosome"/>
    <property type="evidence" value="ECO:0007669"/>
    <property type="project" value="InterPro"/>
</dbReference>
<dbReference type="GO" id="GO:0006412">
    <property type="term" value="P:translation"/>
    <property type="evidence" value="ECO:0007669"/>
    <property type="project" value="UniProtKB-UniRule"/>
</dbReference>
<dbReference type="CDD" id="cd00513">
    <property type="entry name" value="Ribosomal_L32_L32e"/>
    <property type="match status" value="1"/>
</dbReference>
<dbReference type="HAMAP" id="MF_00810">
    <property type="entry name" value="Ribosomal_eL32"/>
    <property type="match status" value="1"/>
</dbReference>
<dbReference type="InterPro" id="IPR001515">
    <property type="entry name" value="Ribosomal_eL32"/>
</dbReference>
<dbReference type="InterPro" id="IPR023654">
    <property type="entry name" value="Ribosomal_eL32_arc"/>
</dbReference>
<dbReference type="InterPro" id="IPR018263">
    <property type="entry name" value="Ribosomal_eL32_CS"/>
</dbReference>
<dbReference type="InterPro" id="IPR036351">
    <property type="entry name" value="Ribosomal_eL32_sf"/>
</dbReference>
<dbReference type="NCBIfam" id="NF006332">
    <property type="entry name" value="PRK08562.1"/>
    <property type="match status" value="1"/>
</dbReference>
<dbReference type="PANTHER" id="PTHR23413">
    <property type="entry name" value="60S RIBOSOMAL PROTEIN L32 AND DNA-DIRECTED RNA POLYMERASE II, SUBUNIT N"/>
    <property type="match status" value="1"/>
</dbReference>
<dbReference type="PANTHER" id="PTHR23413:SF1">
    <property type="entry name" value="RIBOSOMAL PROTEIN L32"/>
    <property type="match status" value="1"/>
</dbReference>
<dbReference type="Pfam" id="PF01655">
    <property type="entry name" value="Ribosomal_L32e"/>
    <property type="match status" value="1"/>
</dbReference>
<dbReference type="SMART" id="SM01393">
    <property type="entry name" value="Ribosomal_L32e"/>
    <property type="match status" value="1"/>
</dbReference>
<dbReference type="SUPFAM" id="SSF52042">
    <property type="entry name" value="Ribosomal protein L32e"/>
    <property type="match status" value="1"/>
</dbReference>
<dbReference type="PROSITE" id="PS00580">
    <property type="entry name" value="RIBOSOMAL_L32E"/>
    <property type="match status" value="1"/>
</dbReference>
<gene>
    <name type="primary">rpl32e</name>
    <name type="ordered locus">PTO0657</name>
</gene>
<keyword id="KW-0687">Ribonucleoprotein</keyword>
<keyword id="KW-0689">Ribosomal protein</keyword>
<feature type="chain" id="PRO_0000131158" description="Large ribosomal subunit protein eL32">
    <location>
        <begin position="1"/>
        <end position="134"/>
    </location>
</feature>
<protein>
    <recommendedName>
        <fullName evidence="1">Large ribosomal subunit protein eL32</fullName>
    </recommendedName>
    <alternativeName>
        <fullName>50S ribosomal protein L32e</fullName>
    </alternativeName>
</protein>